<sequence>MLGLFNNSNSINGSGNNQDIDEIKREQMSNFDQFEDGLNNNNSNNNNNNNNSNNNNSNNNENINRKTGSTLLSSSTSQLNSSSGQISFSKDAVAPTKKRRYIVDKDHIFSWTPYCKAYWNKLINVYGVELEPPQLNVSAEKGFSFSEVDNSWIYYRRNHFQLGIGVSHCFQFLESSPPLISLNGSIYPVDDFYLCIRGVKNGPDVNINEEVEVELYQTNSKREKGEEKLPPPVLMTFSTNVTIPRLHFRKATANNARKHKLPNPQQEFFRLVLTVVARAQSRDFCITSMISDPLIVRTGHPTCNPVSNNPSTPGTPISNFDSSNNNNSSSSSSIINNNNNGISGYSPHTTVTTNSTTIIPTYGSGNNNNNNNNNNNNSSGNSSSTSPMVGPLGVVFPPSPINSLSNHNSPHLTPIQYNNNNNNSNNNSNNNNNNNNNNNNSNNNNNNSNNNNHQFQSNNRIFKGNLSNPFDLNYSQNSNNNNNNNNNNNNNNNNNNNNNNNNNNNNNNNNNNNNNNNNNNNNNNNNNNNIFSHNNNNNNNNNNNNNNNNNNNNNNNNNNNNNNNNNNNSQNIHFYNNNSNNNNNNNSSSSNNNNNNNNNNNNNNNKNNNNNGNNSQINEKHNLSSNSNSSGFTAELFSSIENTIRNNNFLTQKPHFPFDQTLHQLQFQAQNNQYDQINGKLDNIHNNSNNNSSNNNNSNNNSSNNNSNNNNNNNGSHTASVKRKLSNSYDQQNLEIESPQSYISSPTPYFVDNKQPQPQPQPQPQPQPQPQPQSQSQSQSQSQSQSQSQSQSQSQPIQQIVQQQLSSPTQFSQSEEVILSSPLQQQTIQSIQQQQPQQQVITNPLLQQPQQQQQNIISIGDMDKNIKWAQSPNGGLFHFGNVGVNSENPQEALSVNGNVSISGMMYQPSDKRVKENVKPVNSKDQLSNIMKLKIYDYQLTDEWVKSQNLTETKDRGVLAQDLNTPSNHIPNSVKHTGDRILGNGRVIKDFLVVNKDAIFLENVGATQELSKKVDNVCMELETLDKKKFEMLGHKMSELERTTIREIKKNQKRKKIFIGIGVFTLFVIFGLVAVSIVLGTRNTITKNITVYTTGSPGYLNGDCTDSESGSNSCYDSSSNSAIDTTTSTGSGSIK</sequence>
<comment type="subcellular location">
    <subcellularLocation>
        <location evidence="6">Membrane</location>
        <topology evidence="6">Single-pass membrane protein</topology>
    </subcellularLocation>
</comment>
<comment type="disruption phenotype">
    <text evidence="5">No visible phenotype.</text>
</comment>
<dbReference type="EMBL" id="AAFI02000187">
    <property type="protein sequence ID" value="EAS66813.1"/>
    <property type="molecule type" value="Genomic_DNA"/>
</dbReference>
<dbReference type="RefSeq" id="XP_001134496.1">
    <property type="nucleotide sequence ID" value="XM_001134496.1"/>
</dbReference>
<dbReference type="SMR" id="Q1ZXA9"/>
<dbReference type="FunCoup" id="Q1ZXA9">
    <property type="interactions" value="51"/>
</dbReference>
<dbReference type="GlyGen" id="Q1ZXA9">
    <property type="glycosylation" value="1 site"/>
</dbReference>
<dbReference type="PaxDb" id="44689-DDB0232147"/>
<dbReference type="EnsemblProtists" id="EAS66813">
    <property type="protein sequence ID" value="EAS66813"/>
    <property type="gene ID" value="DDB_G0292186"/>
</dbReference>
<dbReference type="GeneID" id="8628515"/>
<dbReference type="KEGG" id="ddi:DDB_G0292186"/>
<dbReference type="dictyBase" id="DDB_G0292186"/>
<dbReference type="VEuPathDB" id="AmoebaDB:DDB_G0292186"/>
<dbReference type="eggNOG" id="KOG3661">
    <property type="taxonomic scope" value="Eukaryota"/>
</dbReference>
<dbReference type="HOGENOM" id="CLU_278794_0_0_1"/>
<dbReference type="InParanoid" id="Q1ZXA9"/>
<dbReference type="OMA" id="YRRNHFQ"/>
<dbReference type="PRO" id="PR:Q1ZXA9"/>
<dbReference type="Proteomes" id="UP000002195">
    <property type="component" value="Chromosome 6"/>
</dbReference>
<dbReference type="GO" id="GO:0005789">
    <property type="term" value="C:endoplasmic reticulum membrane"/>
    <property type="evidence" value="ECO:0000318"/>
    <property type="project" value="GO_Central"/>
</dbReference>
<dbReference type="GO" id="GO:0005634">
    <property type="term" value="C:nucleus"/>
    <property type="evidence" value="ECO:0000318"/>
    <property type="project" value="GO_Central"/>
</dbReference>
<dbReference type="GO" id="GO:0003700">
    <property type="term" value="F:DNA-binding transcription factor activity"/>
    <property type="evidence" value="ECO:0000318"/>
    <property type="project" value="GO_Central"/>
</dbReference>
<dbReference type="GO" id="GO:0043565">
    <property type="term" value="F:sequence-specific DNA binding"/>
    <property type="evidence" value="ECO:0000318"/>
    <property type="project" value="GO_Central"/>
</dbReference>
<dbReference type="GO" id="GO:0045893">
    <property type="term" value="P:positive regulation of DNA-templated transcription"/>
    <property type="evidence" value="ECO:0000318"/>
    <property type="project" value="GO_Central"/>
</dbReference>
<dbReference type="GO" id="GO:0016540">
    <property type="term" value="P:protein autoprocessing"/>
    <property type="evidence" value="ECO:0000318"/>
    <property type="project" value="GO_Central"/>
</dbReference>
<dbReference type="FunFam" id="2.60.40.1390:FF:000012">
    <property type="entry name" value="Myelin gene regulatory factor-like A"/>
    <property type="match status" value="1"/>
</dbReference>
<dbReference type="Gene3D" id="2.60.40.1390">
    <property type="entry name" value="NDT80 DNA-binding domain"/>
    <property type="match status" value="1"/>
</dbReference>
<dbReference type="InterPro" id="IPR051577">
    <property type="entry name" value="MRF-like"/>
</dbReference>
<dbReference type="InterPro" id="IPR026932">
    <property type="entry name" value="MYRF_ICA"/>
</dbReference>
<dbReference type="InterPro" id="IPR024061">
    <property type="entry name" value="NDT80_DNA-bd_dom"/>
</dbReference>
<dbReference type="InterPro" id="IPR037141">
    <property type="entry name" value="NDT80_DNA-bd_dom_sf"/>
</dbReference>
<dbReference type="InterPro" id="IPR008967">
    <property type="entry name" value="p53-like_TF_DNA-bd_sf"/>
</dbReference>
<dbReference type="InterPro" id="IPR030392">
    <property type="entry name" value="S74_ICA"/>
</dbReference>
<dbReference type="PANTHER" id="PTHR13029">
    <property type="match status" value="1"/>
</dbReference>
<dbReference type="PANTHER" id="PTHR13029:SF18">
    <property type="entry name" value="MYELIN REGULATORY FACTOR HOMOLOG 1"/>
    <property type="match status" value="1"/>
</dbReference>
<dbReference type="Pfam" id="PF13887">
    <property type="entry name" value="MYRF_ICA"/>
    <property type="match status" value="1"/>
</dbReference>
<dbReference type="Pfam" id="PF05224">
    <property type="entry name" value="NDT80_PhoG"/>
    <property type="match status" value="1"/>
</dbReference>
<dbReference type="Pfam" id="PF13884">
    <property type="entry name" value="Peptidase_S74"/>
    <property type="match status" value="1"/>
</dbReference>
<dbReference type="SUPFAM" id="SSF49417">
    <property type="entry name" value="p53-like transcription factors"/>
    <property type="match status" value="1"/>
</dbReference>
<dbReference type="PROSITE" id="PS51688">
    <property type="entry name" value="ICA"/>
    <property type="match status" value="1"/>
</dbReference>
<dbReference type="PROSITE" id="PS51517">
    <property type="entry name" value="NDT80"/>
    <property type="match status" value="1"/>
</dbReference>
<evidence type="ECO:0000255" key="1"/>
<evidence type="ECO:0000255" key="2">
    <source>
        <dbReference type="PROSITE-ProRule" id="PRU00850"/>
    </source>
</evidence>
<evidence type="ECO:0000255" key="3">
    <source>
        <dbReference type="PROSITE-ProRule" id="PRU01025"/>
    </source>
</evidence>
<evidence type="ECO:0000256" key="4">
    <source>
        <dbReference type="SAM" id="MobiDB-lite"/>
    </source>
</evidence>
<evidence type="ECO:0000269" key="5">
    <source>
    </source>
</evidence>
<evidence type="ECO:0000305" key="6"/>
<keyword id="KW-0238">DNA-binding</keyword>
<keyword id="KW-0472">Membrane</keyword>
<keyword id="KW-1185">Reference proteome</keyword>
<keyword id="KW-0812">Transmembrane</keyword>
<keyword id="KW-1133">Transmembrane helix</keyword>
<organism>
    <name type="scientific">Dictyostelium discoideum</name>
    <name type="common">Social amoeba</name>
    <dbReference type="NCBI Taxonomy" id="44689"/>
    <lineage>
        <taxon>Eukaryota</taxon>
        <taxon>Amoebozoa</taxon>
        <taxon>Evosea</taxon>
        <taxon>Eumycetozoa</taxon>
        <taxon>Dictyostelia</taxon>
        <taxon>Dictyosteliales</taxon>
        <taxon>Dictyosteliaceae</taxon>
        <taxon>Dictyostelium</taxon>
    </lineage>
</organism>
<proteinExistence type="predicted"/>
<reference key="1">
    <citation type="journal article" date="2005" name="Nature">
        <title>The genome of the social amoeba Dictyostelium discoideum.</title>
        <authorList>
            <person name="Eichinger L."/>
            <person name="Pachebat J.A."/>
            <person name="Gloeckner G."/>
            <person name="Rajandream M.A."/>
            <person name="Sucgang R."/>
            <person name="Berriman M."/>
            <person name="Song J."/>
            <person name="Olsen R."/>
            <person name="Szafranski K."/>
            <person name="Xu Q."/>
            <person name="Tunggal B."/>
            <person name="Kummerfeld S."/>
            <person name="Madera M."/>
            <person name="Konfortov B.A."/>
            <person name="Rivero F."/>
            <person name="Bankier A.T."/>
            <person name="Lehmann R."/>
            <person name="Hamlin N."/>
            <person name="Davies R."/>
            <person name="Gaudet P."/>
            <person name="Fey P."/>
            <person name="Pilcher K."/>
            <person name="Chen G."/>
            <person name="Saunders D."/>
            <person name="Sodergren E.J."/>
            <person name="Davis P."/>
            <person name="Kerhornou A."/>
            <person name="Nie X."/>
            <person name="Hall N."/>
            <person name="Anjard C."/>
            <person name="Hemphill L."/>
            <person name="Bason N."/>
            <person name="Farbrother P."/>
            <person name="Desany B."/>
            <person name="Just E."/>
            <person name="Morio T."/>
            <person name="Rost R."/>
            <person name="Churcher C.M."/>
            <person name="Cooper J."/>
            <person name="Haydock S."/>
            <person name="van Driessche N."/>
            <person name="Cronin A."/>
            <person name="Goodhead I."/>
            <person name="Muzny D.M."/>
            <person name="Mourier T."/>
            <person name="Pain A."/>
            <person name="Lu M."/>
            <person name="Harper D."/>
            <person name="Lindsay R."/>
            <person name="Hauser H."/>
            <person name="James K.D."/>
            <person name="Quiles M."/>
            <person name="Madan Babu M."/>
            <person name="Saito T."/>
            <person name="Buchrieser C."/>
            <person name="Wardroper A."/>
            <person name="Felder M."/>
            <person name="Thangavelu M."/>
            <person name="Johnson D."/>
            <person name="Knights A."/>
            <person name="Loulseged H."/>
            <person name="Mungall K.L."/>
            <person name="Oliver K."/>
            <person name="Price C."/>
            <person name="Quail M.A."/>
            <person name="Urushihara H."/>
            <person name="Hernandez J."/>
            <person name="Rabbinowitsch E."/>
            <person name="Steffen D."/>
            <person name="Sanders M."/>
            <person name="Ma J."/>
            <person name="Kohara Y."/>
            <person name="Sharp S."/>
            <person name="Simmonds M.N."/>
            <person name="Spiegler S."/>
            <person name="Tivey A."/>
            <person name="Sugano S."/>
            <person name="White B."/>
            <person name="Walker D."/>
            <person name="Woodward J.R."/>
            <person name="Winckler T."/>
            <person name="Tanaka Y."/>
            <person name="Shaulsky G."/>
            <person name="Schleicher M."/>
            <person name="Weinstock G.M."/>
            <person name="Rosenthal A."/>
            <person name="Cox E.C."/>
            <person name="Chisholm R.L."/>
            <person name="Gibbs R.A."/>
            <person name="Loomis W.F."/>
            <person name="Platzer M."/>
            <person name="Kay R.R."/>
            <person name="Williams J.G."/>
            <person name="Dear P.H."/>
            <person name="Noegel A.A."/>
            <person name="Barrell B.G."/>
            <person name="Kuspa A."/>
        </authorList>
    </citation>
    <scope>NUCLEOTIDE SEQUENCE [LARGE SCALE GENOMIC DNA]</scope>
    <source>
        <strain>AX4</strain>
    </source>
</reference>
<reference key="2">
    <citation type="journal article" date="2006" name="J. Cell Sci.">
        <title>Functional genomics in Dictyostelium: midA, a new conserved protein, is required for mitochondrial function and development.</title>
        <authorList>
            <person name="Torija P."/>
            <person name="Vicente J.J."/>
            <person name="Rodrigues T.B."/>
            <person name="Robles A."/>
            <person name="Cerdan S."/>
            <person name="Sastre L."/>
            <person name="Calvo R.M."/>
            <person name="Escalante R."/>
        </authorList>
    </citation>
    <scope>DISRUPTION PHENOTYPE</scope>
</reference>
<feature type="chain" id="PRO_0000371409" description="Uncharacterized protein DDB_G0292186">
    <location>
        <begin position="1"/>
        <end position="1133"/>
    </location>
</feature>
<feature type="transmembrane region" description="Helical" evidence="1">
    <location>
        <begin position="1055"/>
        <end position="1075"/>
    </location>
</feature>
<feature type="domain" description="Peptidase S74" evidence="3">
    <location>
        <begin position="909"/>
        <end position="1020"/>
    </location>
</feature>
<feature type="DNA-binding region" description="NDT80" evidence="2">
    <location>
        <begin position="40"/>
        <end position="308"/>
    </location>
</feature>
<feature type="region of interest" description="Disordered" evidence="4">
    <location>
        <begin position="33"/>
        <end position="83"/>
    </location>
</feature>
<feature type="region of interest" description="Disordered" evidence="4">
    <location>
        <begin position="305"/>
        <end position="629"/>
    </location>
</feature>
<feature type="region of interest" description="Disordered" evidence="4">
    <location>
        <begin position="679"/>
        <end position="723"/>
    </location>
</feature>
<feature type="region of interest" description="Disordered" evidence="4">
    <location>
        <begin position="736"/>
        <end position="817"/>
    </location>
</feature>
<feature type="region of interest" description="Disordered" evidence="4">
    <location>
        <begin position="1107"/>
        <end position="1133"/>
    </location>
</feature>
<feature type="compositionally biased region" description="Low complexity" evidence="4">
    <location>
        <begin position="39"/>
        <end position="83"/>
    </location>
</feature>
<feature type="compositionally biased region" description="Polar residues" evidence="4">
    <location>
        <begin position="305"/>
        <end position="316"/>
    </location>
</feature>
<feature type="compositionally biased region" description="Low complexity" evidence="4">
    <location>
        <begin position="317"/>
        <end position="384"/>
    </location>
</feature>
<feature type="compositionally biased region" description="Polar residues" evidence="4">
    <location>
        <begin position="401"/>
        <end position="417"/>
    </location>
</feature>
<feature type="compositionally biased region" description="Low complexity" evidence="4">
    <location>
        <begin position="418"/>
        <end position="452"/>
    </location>
</feature>
<feature type="compositionally biased region" description="Polar residues" evidence="4">
    <location>
        <begin position="453"/>
        <end position="470"/>
    </location>
</feature>
<feature type="compositionally biased region" description="Low complexity" evidence="4">
    <location>
        <begin position="473"/>
        <end position="615"/>
    </location>
</feature>
<feature type="compositionally biased region" description="Low complexity" evidence="4">
    <location>
        <begin position="686"/>
        <end position="714"/>
    </location>
</feature>
<feature type="compositionally biased region" description="Polar residues" evidence="4">
    <location>
        <begin position="736"/>
        <end position="747"/>
    </location>
</feature>
<feature type="compositionally biased region" description="Pro residues" evidence="4">
    <location>
        <begin position="757"/>
        <end position="771"/>
    </location>
</feature>
<feature type="compositionally biased region" description="Low complexity" evidence="4">
    <location>
        <begin position="772"/>
        <end position="808"/>
    </location>
</feature>
<feature type="site" description="Cleavage; by autolysis" evidence="3">
    <location>
        <begin position="908"/>
        <end position="909"/>
    </location>
</feature>
<gene>
    <name type="ORF">DDB_G0292186</name>
</gene>
<name>Y9218_DICDI</name>
<protein>
    <recommendedName>
        <fullName>Uncharacterized protein DDB_G0292186</fullName>
    </recommendedName>
</protein>
<accession>Q1ZXA9</accession>